<dbReference type="EC" id="2.7.7.8" evidence="1"/>
<dbReference type="EMBL" id="AL111168">
    <property type="protein sequence ID" value="CAL35368.1"/>
    <property type="molecule type" value="Genomic_DNA"/>
</dbReference>
<dbReference type="PIR" id="G81332">
    <property type="entry name" value="G81332"/>
</dbReference>
<dbReference type="RefSeq" id="WP_002853182.1">
    <property type="nucleotide sequence ID" value="NZ_SZUC01000001.1"/>
</dbReference>
<dbReference type="RefSeq" id="YP_002344644.1">
    <property type="nucleotide sequence ID" value="NC_002163.1"/>
</dbReference>
<dbReference type="SMR" id="Q0P903"/>
<dbReference type="IntAct" id="Q0P903">
    <property type="interactions" value="1"/>
</dbReference>
<dbReference type="STRING" id="192222.Cj1253"/>
<dbReference type="PaxDb" id="192222-Cj1253"/>
<dbReference type="EnsemblBacteria" id="CAL35368">
    <property type="protein sequence ID" value="CAL35368"/>
    <property type="gene ID" value="Cj1253"/>
</dbReference>
<dbReference type="GeneID" id="905544"/>
<dbReference type="KEGG" id="cje:Cj1253"/>
<dbReference type="PATRIC" id="fig|192222.6.peg.1236"/>
<dbReference type="eggNOG" id="COG1185">
    <property type="taxonomic scope" value="Bacteria"/>
</dbReference>
<dbReference type="HOGENOM" id="CLU_004217_2_2_7"/>
<dbReference type="OrthoDB" id="9804305at2"/>
<dbReference type="Proteomes" id="UP000000799">
    <property type="component" value="Chromosome"/>
</dbReference>
<dbReference type="GO" id="GO:0005829">
    <property type="term" value="C:cytosol"/>
    <property type="evidence" value="ECO:0007669"/>
    <property type="project" value="TreeGrafter"/>
</dbReference>
<dbReference type="GO" id="GO:0000175">
    <property type="term" value="F:3'-5'-RNA exonuclease activity"/>
    <property type="evidence" value="ECO:0007669"/>
    <property type="project" value="TreeGrafter"/>
</dbReference>
<dbReference type="GO" id="GO:0000287">
    <property type="term" value="F:magnesium ion binding"/>
    <property type="evidence" value="ECO:0007669"/>
    <property type="project" value="UniProtKB-UniRule"/>
</dbReference>
<dbReference type="GO" id="GO:0004654">
    <property type="term" value="F:polyribonucleotide nucleotidyltransferase activity"/>
    <property type="evidence" value="ECO:0007669"/>
    <property type="project" value="UniProtKB-UniRule"/>
</dbReference>
<dbReference type="GO" id="GO:0003723">
    <property type="term" value="F:RNA binding"/>
    <property type="evidence" value="ECO:0007669"/>
    <property type="project" value="UniProtKB-UniRule"/>
</dbReference>
<dbReference type="GO" id="GO:0006402">
    <property type="term" value="P:mRNA catabolic process"/>
    <property type="evidence" value="ECO:0007669"/>
    <property type="project" value="UniProtKB-UniRule"/>
</dbReference>
<dbReference type="GO" id="GO:0006396">
    <property type="term" value="P:RNA processing"/>
    <property type="evidence" value="ECO:0007669"/>
    <property type="project" value="InterPro"/>
</dbReference>
<dbReference type="CDD" id="cd02393">
    <property type="entry name" value="KH-I_PNPase"/>
    <property type="match status" value="1"/>
</dbReference>
<dbReference type="CDD" id="cd11364">
    <property type="entry name" value="RNase_PH_PNPase_2"/>
    <property type="match status" value="1"/>
</dbReference>
<dbReference type="FunFam" id="3.30.1370.10:FF:000001">
    <property type="entry name" value="Polyribonucleotide nucleotidyltransferase"/>
    <property type="match status" value="1"/>
</dbReference>
<dbReference type="FunFam" id="3.30.230.70:FF:000026">
    <property type="entry name" value="Polyribonucleotide nucleotidyltransferase"/>
    <property type="match status" value="1"/>
</dbReference>
<dbReference type="FunFam" id="3.30.230.70:FF:000029">
    <property type="entry name" value="Polyribonucleotide nucleotidyltransferase"/>
    <property type="match status" value="1"/>
</dbReference>
<dbReference type="Gene3D" id="3.30.230.70">
    <property type="entry name" value="GHMP Kinase, N-terminal domain"/>
    <property type="match status" value="2"/>
</dbReference>
<dbReference type="Gene3D" id="3.30.1370.10">
    <property type="entry name" value="K Homology domain, type 1"/>
    <property type="match status" value="1"/>
</dbReference>
<dbReference type="Gene3D" id="2.40.50.140">
    <property type="entry name" value="Nucleic acid-binding proteins"/>
    <property type="match status" value="1"/>
</dbReference>
<dbReference type="HAMAP" id="MF_01595">
    <property type="entry name" value="PNPase"/>
    <property type="match status" value="1"/>
</dbReference>
<dbReference type="InterPro" id="IPR001247">
    <property type="entry name" value="ExoRNase_PH_dom1"/>
</dbReference>
<dbReference type="InterPro" id="IPR015847">
    <property type="entry name" value="ExoRNase_PH_dom2"/>
</dbReference>
<dbReference type="InterPro" id="IPR036345">
    <property type="entry name" value="ExoRNase_PH_dom2_sf"/>
</dbReference>
<dbReference type="InterPro" id="IPR004087">
    <property type="entry name" value="KH_dom"/>
</dbReference>
<dbReference type="InterPro" id="IPR004088">
    <property type="entry name" value="KH_dom_type_1"/>
</dbReference>
<dbReference type="InterPro" id="IPR036612">
    <property type="entry name" value="KH_dom_type_1_sf"/>
</dbReference>
<dbReference type="InterPro" id="IPR012340">
    <property type="entry name" value="NA-bd_OB-fold"/>
</dbReference>
<dbReference type="InterPro" id="IPR012162">
    <property type="entry name" value="PNPase"/>
</dbReference>
<dbReference type="InterPro" id="IPR027408">
    <property type="entry name" value="PNPase/RNase_PH_dom_sf"/>
</dbReference>
<dbReference type="InterPro" id="IPR015848">
    <property type="entry name" value="PNPase_PH_RNA-bd_bac/org-type"/>
</dbReference>
<dbReference type="InterPro" id="IPR020568">
    <property type="entry name" value="Ribosomal_Su5_D2-typ_SF"/>
</dbReference>
<dbReference type="InterPro" id="IPR003029">
    <property type="entry name" value="S1_domain"/>
</dbReference>
<dbReference type="NCBIfam" id="TIGR03591">
    <property type="entry name" value="polynuc_phos"/>
    <property type="match status" value="1"/>
</dbReference>
<dbReference type="NCBIfam" id="NF008805">
    <property type="entry name" value="PRK11824.1"/>
    <property type="match status" value="1"/>
</dbReference>
<dbReference type="PANTHER" id="PTHR11252">
    <property type="entry name" value="POLYRIBONUCLEOTIDE NUCLEOTIDYLTRANSFERASE"/>
    <property type="match status" value="1"/>
</dbReference>
<dbReference type="PANTHER" id="PTHR11252:SF0">
    <property type="entry name" value="POLYRIBONUCLEOTIDE NUCLEOTIDYLTRANSFERASE 1, MITOCHONDRIAL"/>
    <property type="match status" value="1"/>
</dbReference>
<dbReference type="Pfam" id="PF00013">
    <property type="entry name" value="KH_1"/>
    <property type="match status" value="1"/>
</dbReference>
<dbReference type="Pfam" id="PF03726">
    <property type="entry name" value="PNPase"/>
    <property type="match status" value="1"/>
</dbReference>
<dbReference type="Pfam" id="PF01138">
    <property type="entry name" value="RNase_PH"/>
    <property type="match status" value="2"/>
</dbReference>
<dbReference type="Pfam" id="PF03725">
    <property type="entry name" value="RNase_PH_C"/>
    <property type="match status" value="2"/>
</dbReference>
<dbReference type="Pfam" id="PF00575">
    <property type="entry name" value="S1"/>
    <property type="match status" value="1"/>
</dbReference>
<dbReference type="PIRSF" id="PIRSF005499">
    <property type="entry name" value="PNPase"/>
    <property type="match status" value="1"/>
</dbReference>
<dbReference type="SMART" id="SM00322">
    <property type="entry name" value="KH"/>
    <property type="match status" value="1"/>
</dbReference>
<dbReference type="SMART" id="SM00316">
    <property type="entry name" value="S1"/>
    <property type="match status" value="1"/>
</dbReference>
<dbReference type="SUPFAM" id="SSF54791">
    <property type="entry name" value="Eukaryotic type KH-domain (KH-domain type I)"/>
    <property type="match status" value="1"/>
</dbReference>
<dbReference type="SUPFAM" id="SSF50249">
    <property type="entry name" value="Nucleic acid-binding proteins"/>
    <property type="match status" value="1"/>
</dbReference>
<dbReference type="SUPFAM" id="SSF55666">
    <property type="entry name" value="Ribonuclease PH domain 2-like"/>
    <property type="match status" value="2"/>
</dbReference>
<dbReference type="SUPFAM" id="SSF54211">
    <property type="entry name" value="Ribosomal protein S5 domain 2-like"/>
    <property type="match status" value="2"/>
</dbReference>
<dbReference type="PROSITE" id="PS50084">
    <property type="entry name" value="KH_TYPE_1"/>
    <property type="match status" value="1"/>
</dbReference>
<dbReference type="PROSITE" id="PS50126">
    <property type="entry name" value="S1"/>
    <property type="match status" value="1"/>
</dbReference>
<sequence length="719" mass="79171">MQYSIEINKNTEIFDIDKVAKQAAGAVLMRQGKSVVLATVAREEKQVEEDFLPLTVQYIEKAYAAGKIPGGYVKRETKPSDAETLTARIIDRSLRPLFPKGYAYPTQIVVMVLSADPKVDLQVMSLNAASVALYLSDIPMKAPVCGVRIGKIDGNFILNPNNEELQNSTLDLYVAGVKDELLMIEMRALPDQKENEIFIEAPYADVLTQTTSQNMNELSEDEILEALNLAQKAILNGSNAYEEAFSKHKKNSQIELKNEIEHPEILAFIENNFQKQIKEAINQMAKSERASELNKIAKEILNLEITKDWSEESVLNTLAKVKRKLIREQILNEGKRADGRSLNEVRPISIETNILPNAHGSCLFTRGQTQALVVATLGGENDSQMIDLLTEKNPISERFMVNYNFPGFSVGEASPIKAPGRRELGHGNLAKRALYPSVDENYPYVIRLVSEILESNGSSSMATVCGGSLALKAAGVPSLKLVAGVAMGLIFEDNKYAVLTDIMGLEDHDGDMDFKVAGSKDGVTALQMDIKLGGIDQEILKQALYQAKEGRIHILNIMEEAAKEIIVNEEVLPKLELFSVDPSKIVDIIGQAGKTIKEIVEKFGVSIDLDREKGEVKIAGSQNEQIKAAKDYIINITSSQKGTKKGPKDKDISGFELGQEFQGIVKKIAPFGAFVELKNGVDGLLHSSKIKHLNLSENQSLKVKISEIKNGKISVDLCE</sequence>
<proteinExistence type="inferred from homology"/>
<reference key="1">
    <citation type="journal article" date="2000" name="Nature">
        <title>The genome sequence of the food-borne pathogen Campylobacter jejuni reveals hypervariable sequences.</title>
        <authorList>
            <person name="Parkhill J."/>
            <person name="Wren B.W."/>
            <person name="Mungall K.L."/>
            <person name="Ketley J.M."/>
            <person name="Churcher C.M."/>
            <person name="Basham D."/>
            <person name="Chillingworth T."/>
            <person name="Davies R.M."/>
            <person name="Feltwell T."/>
            <person name="Holroyd S."/>
            <person name="Jagels K."/>
            <person name="Karlyshev A.V."/>
            <person name="Moule S."/>
            <person name="Pallen M.J."/>
            <person name="Penn C.W."/>
            <person name="Quail M.A."/>
            <person name="Rajandream M.A."/>
            <person name="Rutherford K.M."/>
            <person name="van Vliet A.H.M."/>
            <person name="Whitehead S."/>
            <person name="Barrell B.G."/>
        </authorList>
    </citation>
    <scope>NUCLEOTIDE SEQUENCE [LARGE SCALE GENOMIC DNA]</scope>
    <source>
        <strain>ATCC 700819 / NCTC 11168</strain>
    </source>
</reference>
<comment type="function">
    <text evidence="1">Involved in mRNA degradation. Catalyzes the phosphorolysis of single-stranded polyribonucleotides processively in the 3'- to 5'-direction.</text>
</comment>
<comment type="catalytic activity">
    <reaction evidence="1">
        <text>RNA(n+1) + phosphate = RNA(n) + a ribonucleoside 5'-diphosphate</text>
        <dbReference type="Rhea" id="RHEA:22096"/>
        <dbReference type="Rhea" id="RHEA-COMP:14527"/>
        <dbReference type="Rhea" id="RHEA-COMP:17342"/>
        <dbReference type="ChEBI" id="CHEBI:43474"/>
        <dbReference type="ChEBI" id="CHEBI:57930"/>
        <dbReference type="ChEBI" id="CHEBI:140395"/>
        <dbReference type="EC" id="2.7.7.8"/>
    </reaction>
</comment>
<comment type="cofactor">
    <cofactor evidence="1">
        <name>Mg(2+)</name>
        <dbReference type="ChEBI" id="CHEBI:18420"/>
    </cofactor>
</comment>
<comment type="subcellular location">
    <subcellularLocation>
        <location evidence="1">Cytoplasm</location>
    </subcellularLocation>
</comment>
<comment type="similarity">
    <text evidence="1">Belongs to the polyribonucleotide nucleotidyltransferase family.</text>
</comment>
<keyword id="KW-0963">Cytoplasm</keyword>
<keyword id="KW-0460">Magnesium</keyword>
<keyword id="KW-0479">Metal-binding</keyword>
<keyword id="KW-0548">Nucleotidyltransferase</keyword>
<keyword id="KW-1185">Reference proteome</keyword>
<keyword id="KW-0694">RNA-binding</keyword>
<keyword id="KW-0808">Transferase</keyword>
<name>PNP_CAMJE</name>
<accession>Q0P903</accession>
<gene>
    <name evidence="1" type="primary">pnp</name>
    <name type="ordered locus">Cj1253</name>
</gene>
<feature type="chain" id="PRO_0000329571" description="Polyribonucleotide nucleotidyltransferase">
    <location>
        <begin position="1"/>
        <end position="719"/>
    </location>
</feature>
<feature type="domain" description="KH" evidence="1">
    <location>
        <begin position="573"/>
        <end position="633"/>
    </location>
</feature>
<feature type="domain" description="S1 motif" evidence="1">
    <location>
        <begin position="658"/>
        <end position="719"/>
    </location>
</feature>
<feature type="binding site" evidence="1">
    <location>
        <position position="507"/>
    </location>
    <ligand>
        <name>Mg(2+)</name>
        <dbReference type="ChEBI" id="CHEBI:18420"/>
    </ligand>
</feature>
<feature type="binding site" evidence="1">
    <location>
        <position position="513"/>
    </location>
    <ligand>
        <name>Mg(2+)</name>
        <dbReference type="ChEBI" id="CHEBI:18420"/>
    </ligand>
</feature>
<organism>
    <name type="scientific">Campylobacter jejuni subsp. jejuni serotype O:2 (strain ATCC 700819 / NCTC 11168)</name>
    <dbReference type="NCBI Taxonomy" id="192222"/>
    <lineage>
        <taxon>Bacteria</taxon>
        <taxon>Pseudomonadati</taxon>
        <taxon>Campylobacterota</taxon>
        <taxon>Epsilonproteobacteria</taxon>
        <taxon>Campylobacterales</taxon>
        <taxon>Campylobacteraceae</taxon>
        <taxon>Campylobacter</taxon>
    </lineage>
</organism>
<protein>
    <recommendedName>
        <fullName evidence="1">Polyribonucleotide nucleotidyltransferase</fullName>
        <ecNumber evidence="1">2.7.7.8</ecNumber>
    </recommendedName>
    <alternativeName>
        <fullName evidence="1">Polynucleotide phosphorylase</fullName>
        <shortName evidence="1">PNPase</shortName>
    </alternativeName>
</protein>
<evidence type="ECO:0000255" key="1">
    <source>
        <dbReference type="HAMAP-Rule" id="MF_01595"/>
    </source>
</evidence>